<proteinExistence type="predicted"/>
<sequence>MTSSLPCGQTSLLLQMTERLALSDAHFRRISQLIYQRAGIVLADHKRDMVYNRLVRRLRSLGLTDFGHYLNLLESNQHSGEWQAFINSLTTNLTAFFREAHHFPLLADHARRRSGEYRVWSAAASTGEEPYSIAMTLADTLGTAPGRWKVFASDIDTEVLEKARSGIYRHEELKNLTPQQLQRYFMRGTGPHEGLVRVRQELANYVDFAPLNLLAKQYTVPGPFDAIFCRNVMIYFDQTTQQEILRRFVPLLKPDGLLFAGHSENFSHLERRFTLRGQTVYALSKD</sequence>
<reference key="1">
    <citation type="journal article" date="1986" name="J. Bacteriol.">
        <title>Nucleotide sequence corresponding to five chemotaxis genes in Escherichia coli.</title>
        <authorList>
            <person name="Mutoh N."/>
            <person name="Simon M.I."/>
        </authorList>
    </citation>
    <scope>NUCLEOTIDE SEQUENCE [GENOMIC DNA]</scope>
</reference>
<reference key="2">
    <citation type="journal article" date="1996" name="DNA Res.">
        <title>A 460-kb DNA sequence of the Escherichia coli K-12 genome corresponding to the 40.1-50.0 min region on the linkage map.</title>
        <authorList>
            <person name="Itoh T."/>
            <person name="Aiba H."/>
            <person name="Baba T."/>
            <person name="Fujita K."/>
            <person name="Hayashi K."/>
            <person name="Inada T."/>
            <person name="Isono K."/>
            <person name="Kasai H."/>
            <person name="Kimura S."/>
            <person name="Kitakawa M."/>
            <person name="Kitagawa M."/>
            <person name="Makino K."/>
            <person name="Miki T."/>
            <person name="Mizobuchi K."/>
            <person name="Mori H."/>
            <person name="Mori T."/>
            <person name="Motomura K."/>
            <person name="Nakade S."/>
            <person name="Nakamura Y."/>
            <person name="Nashimoto H."/>
            <person name="Nishio Y."/>
            <person name="Oshima T."/>
            <person name="Saito N."/>
            <person name="Sampei G."/>
            <person name="Seki Y."/>
            <person name="Sivasundaram S."/>
            <person name="Tagami H."/>
            <person name="Takeda J."/>
            <person name="Takemoto K."/>
            <person name="Wada C."/>
            <person name="Yamamoto Y."/>
            <person name="Horiuchi T."/>
        </authorList>
    </citation>
    <scope>NUCLEOTIDE SEQUENCE [LARGE SCALE GENOMIC DNA]</scope>
    <source>
        <strain>K12 / W3110 / ATCC 27325 / DSM 5911</strain>
    </source>
</reference>
<reference key="3">
    <citation type="journal article" date="1997" name="Science">
        <title>The complete genome sequence of Escherichia coli K-12.</title>
        <authorList>
            <person name="Blattner F.R."/>
            <person name="Plunkett G. III"/>
            <person name="Bloch C.A."/>
            <person name="Perna N.T."/>
            <person name="Burland V."/>
            <person name="Riley M."/>
            <person name="Collado-Vides J."/>
            <person name="Glasner J.D."/>
            <person name="Rode C.K."/>
            <person name="Mayhew G.F."/>
            <person name="Gregor J."/>
            <person name="Davis N.W."/>
            <person name="Kirkpatrick H.A."/>
            <person name="Goeden M.A."/>
            <person name="Rose D.J."/>
            <person name="Mau B."/>
            <person name="Shao Y."/>
        </authorList>
    </citation>
    <scope>NUCLEOTIDE SEQUENCE [LARGE SCALE GENOMIC DNA]</scope>
    <source>
        <strain>K12 / MG1655 / ATCC 47076</strain>
    </source>
</reference>
<reference key="4">
    <citation type="journal article" date="2006" name="Mol. Syst. Biol.">
        <title>Highly accurate genome sequences of Escherichia coli K-12 strains MG1655 and W3110.</title>
        <authorList>
            <person name="Hayashi K."/>
            <person name="Morooka N."/>
            <person name="Yamamoto Y."/>
            <person name="Fujita K."/>
            <person name="Isono K."/>
            <person name="Choi S."/>
            <person name="Ohtsubo E."/>
            <person name="Baba T."/>
            <person name="Wanner B.L."/>
            <person name="Mori H."/>
            <person name="Horiuchi T."/>
        </authorList>
    </citation>
    <scope>NUCLEOTIDE SEQUENCE [LARGE SCALE GENOMIC DNA]</scope>
    <source>
        <strain>K12 / W3110 / ATCC 27325 / DSM 5911</strain>
    </source>
</reference>
<protein>
    <recommendedName>
        <fullName>Chemotaxis protein methyltransferase</fullName>
        <ecNumber>2.1.1.80</ecNumber>
    </recommendedName>
</protein>
<organism>
    <name type="scientific">Escherichia coli (strain K12)</name>
    <dbReference type="NCBI Taxonomy" id="83333"/>
    <lineage>
        <taxon>Bacteria</taxon>
        <taxon>Pseudomonadati</taxon>
        <taxon>Pseudomonadota</taxon>
        <taxon>Gammaproteobacteria</taxon>
        <taxon>Enterobacterales</taxon>
        <taxon>Enterobacteriaceae</taxon>
        <taxon>Escherichia</taxon>
    </lineage>
</organism>
<accession>P07364</accession>
<accession>P78071</accession>
<name>CHER_ECOLI</name>
<feature type="chain" id="PRO_0000176033" description="Chemotaxis protein methyltransferase">
    <location>
        <begin position="1"/>
        <end position="286"/>
    </location>
</feature>
<feature type="domain" description="CheR-type methyltransferase" evidence="2">
    <location>
        <begin position="15"/>
        <end position="286"/>
    </location>
</feature>
<feature type="binding site" evidence="1">
    <location>
        <position position="92"/>
    </location>
    <ligand>
        <name>S-adenosyl-L-methionine</name>
        <dbReference type="ChEBI" id="CHEBI:59789"/>
    </ligand>
</feature>
<feature type="binding site" evidence="1">
    <location>
        <position position="94"/>
    </location>
    <ligand>
        <name>S-adenosyl-L-methionine</name>
        <dbReference type="ChEBI" id="CHEBI:59789"/>
    </ligand>
</feature>
<feature type="binding site" evidence="1">
    <location>
        <position position="98"/>
    </location>
    <ligand>
        <name>S-adenosyl-L-methionine</name>
        <dbReference type="ChEBI" id="CHEBI:59789"/>
    </ligand>
</feature>
<feature type="binding site" evidence="1">
    <location>
        <position position="129"/>
    </location>
    <ligand>
        <name>S-adenosyl-L-methionine</name>
        <dbReference type="ChEBI" id="CHEBI:59789"/>
    </ligand>
</feature>
<feature type="binding site" evidence="1">
    <location>
        <position position="154"/>
    </location>
    <ligand>
        <name>S-adenosyl-L-methionine</name>
        <dbReference type="ChEBI" id="CHEBI:59789"/>
    </ligand>
</feature>
<feature type="binding site" evidence="1">
    <location>
        <begin position="212"/>
        <end position="213"/>
    </location>
    <ligand>
        <name>S-adenosyl-L-methionine</name>
        <dbReference type="ChEBI" id="CHEBI:59789"/>
    </ligand>
</feature>
<feature type="binding site" evidence="1">
    <location>
        <begin position="230"/>
        <end position="231"/>
    </location>
    <ligand>
        <name>S-adenosyl-L-methionine</name>
        <dbReference type="ChEBI" id="CHEBI:59789"/>
    </ligand>
</feature>
<feature type="sequence conflict" description="In Ref. 1; AAA23568." evidence="3" ref="1">
    <original>R</original>
    <variation>G</variation>
    <location>
        <position position="113"/>
    </location>
</feature>
<keyword id="KW-0145">Chemotaxis</keyword>
<keyword id="KW-0489">Methyltransferase</keyword>
<keyword id="KW-1185">Reference proteome</keyword>
<keyword id="KW-0949">S-adenosyl-L-methionine</keyword>
<keyword id="KW-0808">Transferase</keyword>
<dbReference type="EC" id="2.1.1.80"/>
<dbReference type="EMBL" id="AH000879">
    <property type="protein sequence ID" value="AAA23568.1"/>
    <property type="molecule type" value="Genomic_DNA"/>
</dbReference>
<dbReference type="EMBL" id="U00096">
    <property type="protein sequence ID" value="AAC74954.1"/>
    <property type="molecule type" value="Genomic_DNA"/>
</dbReference>
<dbReference type="EMBL" id="AP009048">
    <property type="protein sequence ID" value="BAA15700.1"/>
    <property type="molecule type" value="Genomic_DNA"/>
</dbReference>
<dbReference type="PIR" id="D64951">
    <property type="entry name" value="XYECCR"/>
</dbReference>
<dbReference type="RefSeq" id="NP_416398.1">
    <property type="nucleotide sequence ID" value="NC_000913.3"/>
</dbReference>
<dbReference type="RefSeq" id="WP_000204337.1">
    <property type="nucleotide sequence ID" value="NZ_LN832404.1"/>
</dbReference>
<dbReference type="SMR" id="P07364"/>
<dbReference type="BioGRID" id="4260375">
    <property type="interactions" value="242"/>
</dbReference>
<dbReference type="BioGRID" id="850753">
    <property type="interactions" value="3"/>
</dbReference>
<dbReference type="DIP" id="DIP-9273N"/>
<dbReference type="FunCoup" id="P07364">
    <property type="interactions" value="400"/>
</dbReference>
<dbReference type="IntAct" id="P07364">
    <property type="interactions" value="16"/>
</dbReference>
<dbReference type="STRING" id="511145.b1884"/>
<dbReference type="PaxDb" id="511145-b1884"/>
<dbReference type="EnsemblBacteria" id="AAC74954">
    <property type="protein sequence ID" value="AAC74954"/>
    <property type="gene ID" value="b1884"/>
</dbReference>
<dbReference type="GeneID" id="946396"/>
<dbReference type="KEGG" id="ecj:JW1873"/>
<dbReference type="KEGG" id="eco:b1884"/>
<dbReference type="KEGG" id="ecoc:C3026_10715"/>
<dbReference type="PATRIC" id="fig|1411691.4.peg.363"/>
<dbReference type="EchoBASE" id="EB0146"/>
<dbReference type="eggNOG" id="COG1352">
    <property type="taxonomic scope" value="Bacteria"/>
</dbReference>
<dbReference type="HOGENOM" id="CLU_025854_0_0_6"/>
<dbReference type="InParanoid" id="P07364"/>
<dbReference type="OMA" id="TEQIIMP"/>
<dbReference type="OrthoDB" id="9816309at2"/>
<dbReference type="PhylomeDB" id="P07364"/>
<dbReference type="BioCyc" id="EcoCyc:CHER-MONOMER"/>
<dbReference type="BioCyc" id="MetaCyc:CHER-MONOMER"/>
<dbReference type="PRO" id="PR:P07364"/>
<dbReference type="Proteomes" id="UP000000625">
    <property type="component" value="Chromosome"/>
</dbReference>
<dbReference type="GO" id="GO:0005829">
    <property type="term" value="C:cytosol"/>
    <property type="evidence" value="ECO:0000314"/>
    <property type="project" value="EcoCyc"/>
</dbReference>
<dbReference type="GO" id="GO:0098561">
    <property type="term" value="C:methyl accepting chemotaxis protein complex"/>
    <property type="evidence" value="ECO:0000314"/>
    <property type="project" value="UniProtKB"/>
</dbReference>
<dbReference type="GO" id="GO:0005886">
    <property type="term" value="C:plasma membrane"/>
    <property type="evidence" value="ECO:0000314"/>
    <property type="project" value="UniProtKB"/>
</dbReference>
<dbReference type="GO" id="GO:0008276">
    <property type="term" value="F:protein methyltransferase activity"/>
    <property type="evidence" value="ECO:0000315"/>
    <property type="project" value="EcoCyc"/>
</dbReference>
<dbReference type="GO" id="GO:0008983">
    <property type="term" value="F:protein-glutamate O-methyltransferase activity"/>
    <property type="evidence" value="ECO:0000314"/>
    <property type="project" value="CAFA"/>
</dbReference>
<dbReference type="GO" id="GO:0006935">
    <property type="term" value="P:chemotaxis"/>
    <property type="evidence" value="ECO:0000315"/>
    <property type="project" value="EcoCyc"/>
</dbReference>
<dbReference type="GO" id="GO:0006479">
    <property type="term" value="P:protein methylation"/>
    <property type="evidence" value="ECO:0000314"/>
    <property type="project" value="CAFA"/>
</dbReference>
<dbReference type="CDD" id="cd02440">
    <property type="entry name" value="AdoMet_MTases"/>
    <property type="match status" value="1"/>
</dbReference>
<dbReference type="FunFam" id="3.40.50.150:FF:000171">
    <property type="entry name" value="Chemotaxis protein methyltransferase"/>
    <property type="match status" value="1"/>
</dbReference>
<dbReference type="Gene3D" id="1.10.155.10">
    <property type="entry name" value="Chemotaxis receptor methyltransferase CheR, N-terminal domain"/>
    <property type="match status" value="1"/>
</dbReference>
<dbReference type="Gene3D" id="3.40.50.150">
    <property type="entry name" value="Vaccinia Virus protein VP39"/>
    <property type="match status" value="1"/>
</dbReference>
<dbReference type="InterPro" id="IPR050903">
    <property type="entry name" value="Bact_Chemotaxis_MeTrfase"/>
</dbReference>
<dbReference type="InterPro" id="IPR026024">
    <property type="entry name" value="Chemotaxis_MeTrfase_CheR"/>
</dbReference>
<dbReference type="InterPro" id="IPR022642">
    <property type="entry name" value="CheR_C"/>
</dbReference>
<dbReference type="InterPro" id="IPR000780">
    <property type="entry name" value="CheR_MeTrfase"/>
</dbReference>
<dbReference type="InterPro" id="IPR022641">
    <property type="entry name" value="CheR_N"/>
</dbReference>
<dbReference type="InterPro" id="IPR036804">
    <property type="entry name" value="CheR_N_sf"/>
</dbReference>
<dbReference type="InterPro" id="IPR029063">
    <property type="entry name" value="SAM-dependent_MTases_sf"/>
</dbReference>
<dbReference type="NCBIfam" id="NF007902">
    <property type="entry name" value="PRK10611.1"/>
    <property type="match status" value="1"/>
</dbReference>
<dbReference type="PANTHER" id="PTHR24422">
    <property type="entry name" value="CHEMOTAXIS PROTEIN METHYLTRANSFERASE"/>
    <property type="match status" value="1"/>
</dbReference>
<dbReference type="PANTHER" id="PTHR24422:SF19">
    <property type="entry name" value="CHEMOTAXIS PROTEIN METHYLTRANSFERASE"/>
    <property type="match status" value="1"/>
</dbReference>
<dbReference type="Pfam" id="PF01739">
    <property type="entry name" value="CheR"/>
    <property type="match status" value="1"/>
</dbReference>
<dbReference type="Pfam" id="PF03705">
    <property type="entry name" value="CheR_N"/>
    <property type="match status" value="1"/>
</dbReference>
<dbReference type="PIRSF" id="PIRSF000410">
    <property type="entry name" value="CheR"/>
    <property type="match status" value="1"/>
</dbReference>
<dbReference type="PRINTS" id="PR00996">
    <property type="entry name" value="CHERMTFRASE"/>
</dbReference>
<dbReference type="SMART" id="SM00138">
    <property type="entry name" value="MeTrc"/>
    <property type="match status" value="1"/>
</dbReference>
<dbReference type="SUPFAM" id="SSF47757">
    <property type="entry name" value="Chemotaxis receptor methyltransferase CheR, N-terminal domain"/>
    <property type="match status" value="1"/>
</dbReference>
<dbReference type="SUPFAM" id="SSF53335">
    <property type="entry name" value="S-adenosyl-L-methionine-dependent methyltransferases"/>
    <property type="match status" value="1"/>
</dbReference>
<dbReference type="PROSITE" id="PS50123">
    <property type="entry name" value="CHER"/>
    <property type="match status" value="1"/>
</dbReference>
<gene>
    <name type="primary">cheR</name>
    <name type="synonym">cheX</name>
    <name type="ordered locus">b1884</name>
    <name type="ordered locus">JW1873</name>
</gene>
<evidence type="ECO:0000250" key="1"/>
<evidence type="ECO:0000255" key="2">
    <source>
        <dbReference type="PROSITE-ProRule" id="PRU00051"/>
    </source>
</evidence>
<evidence type="ECO:0000305" key="3"/>
<comment type="function">
    <text>Methylation of the membrane-bound methyl-accepting chemotaxis proteins (MCP) to form gamma-glutamyl methyl ester residues in MCP.</text>
</comment>
<comment type="catalytic activity">
    <reaction>
        <text>L-glutamyl-[protein] + S-adenosyl-L-methionine = [protein]-L-glutamate 5-O-methyl ester + S-adenosyl-L-homocysteine</text>
        <dbReference type="Rhea" id="RHEA:24452"/>
        <dbReference type="Rhea" id="RHEA-COMP:10208"/>
        <dbReference type="Rhea" id="RHEA-COMP:10311"/>
        <dbReference type="ChEBI" id="CHEBI:29973"/>
        <dbReference type="ChEBI" id="CHEBI:57856"/>
        <dbReference type="ChEBI" id="CHEBI:59789"/>
        <dbReference type="ChEBI" id="CHEBI:82795"/>
        <dbReference type="EC" id="2.1.1.80"/>
    </reaction>
</comment>